<dbReference type="EMBL" id="CR848038">
    <property type="protein sequence ID" value="CAH63572.1"/>
    <property type="molecule type" value="Genomic_DNA"/>
</dbReference>
<dbReference type="RefSeq" id="WP_006342790.1">
    <property type="nucleotide sequence ID" value="NC_004552.2"/>
</dbReference>
<dbReference type="SMR" id="Q5L6Z8"/>
<dbReference type="GeneID" id="93024661"/>
<dbReference type="KEGG" id="cab:CAB114"/>
<dbReference type="eggNOG" id="COG0203">
    <property type="taxonomic scope" value="Bacteria"/>
</dbReference>
<dbReference type="HOGENOM" id="CLU_074407_2_0_0"/>
<dbReference type="OrthoDB" id="9809073at2"/>
<dbReference type="Proteomes" id="UP000001012">
    <property type="component" value="Chromosome"/>
</dbReference>
<dbReference type="GO" id="GO:0022625">
    <property type="term" value="C:cytosolic large ribosomal subunit"/>
    <property type="evidence" value="ECO:0007669"/>
    <property type="project" value="TreeGrafter"/>
</dbReference>
<dbReference type="GO" id="GO:0003735">
    <property type="term" value="F:structural constituent of ribosome"/>
    <property type="evidence" value="ECO:0007669"/>
    <property type="project" value="InterPro"/>
</dbReference>
<dbReference type="GO" id="GO:0006412">
    <property type="term" value="P:translation"/>
    <property type="evidence" value="ECO:0007669"/>
    <property type="project" value="UniProtKB-UniRule"/>
</dbReference>
<dbReference type="FunFam" id="3.90.1030.10:FF:000003">
    <property type="entry name" value="50S ribosomal protein L17"/>
    <property type="match status" value="1"/>
</dbReference>
<dbReference type="Gene3D" id="3.90.1030.10">
    <property type="entry name" value="Ribosomal protein L17"/>
    <property type="match status" value="1"/>
</dbReference>
<dbReference type="HAMAP" id="MF_01368">
    <property type="entry name" value="Ribosomal_bL17"/>
    <property type="match status" value="1"/>
</dbReference>
<dbReference type="InterPro" id="IPR000456">
    <property type="entry name" value="Ribosomal_bL17"/>
</dbReference>
<dbReference type="InterPro" id="IPR047859">
    <property type="entry name" value="Ribosomal_bL17_CS"/>
</dbReference>
<dbReference type="InterPro" id="IPR036373">
    <property type="entry name" value="Ribosomal_bL17_sf"/>
</dbReference>
<dbReference type="NCBIfam" id="TIGR00059">
    <property type="entry name" value="L17"/>
    <property type="match status" value="1"/>
</dbReference>
<dbReference type="PANTHER" id="PTHR14413:SF16">
    <property type="entry name" value="LARGE RIBOSOMAL SUBUNIT PROTEIN BL17M"/>
    <property type="match status" value="1"/>
</dbReference>
<dbReference type="PANTHER" id="PTHR14413">
    <property type="entry name" value="RIBOSOMAL PROTEIN L17"/>
    <property type="match status" value="1"/>
</dbReference>
<dbReference type="Pfam" id="PF01196">
    <property type="entry name" value="Ribosomal_L17"/>
    <property type="match status" value="1"/>
</dbReference>
<dbReference type="SUPFAM" id="SSF64263">
    <property type="entry name" value="Prokaryotic ribosomal protein L17"/>
    <property type="match status" value="1"/>
</dbReference>
<dbReference type="PROSITE" id="PS01167">
    <property type="entry name" value="RIBOSOMAL_L17"/>
    <property type="match status" value="1"/>
</dbReference>
<proteinExistence type="inferred from homology"/>
<protein>
    <recommendedName>
        <fullName evidence="1">Large ribosomal subunit protein bL17</fullName>
    </recommendedName>
    <alternativeName>
        <fullName evidence="2">50S ribosomal protein L17</fullName>
    </alternativeName>
</protein>
<evidence type="ECO:0000255" key="1">
    <source>
        <dbReference type="HAMAP-Rule" id="MF_01368"/>
    </source>
</evidence>
<evidence type="ECO:0000305" key="2"/>
<accession>Q5L6Z8</accession>
<reference key="1">
    <citation type="journal article" date="2005" name="Genome Res.">
        <title>The Chlamydophila abortus genome sequence reveals an array of variable proteins that contribute to interspecies variation.</title>
        <authorList>
            <person name="Thomson N.R."/>
            <person name="Yeats C."/>
            <person name="Bell K."/>
            <person name="Holden M.T.G."/>
            <person name="Bentley S.D."/>
            <person name="Livingstone M."/>
            <person name="Cerdeno-Tarraga A.-M."/>
            <person name="Harris B."/>
            <person name="Doggett J."/>
            <person name="Ormond D."/>
            <person name="Mungall K."/>
            <person name="Clarke K."/>
            <person name="Feltwell T."/>
            <person name="Hance Z."/>
            <person name="Sanders M."/>
            <person name="Quail M.A."/>
            <person name="Price C."/>
            <person name="Barrell B.G."/>
            <person name="Parkhill J."/>
            <person name="Longbottom D."/>
        </authorList>
    </citation>
    <scope>NUCLEOTIDE SEQUENCE [LARGE SCALE GENOMIC DNA]</scope>
    <source>
        <strain>DSM 27085 / S26/3</strain>
    </source>
</reference>
<comment type="subunit">
    <text evidence="1">Part of the 50S ribosomal subunit. Contacts protein L32.</text>
</comment>
<comment type="similarity">
    <text evidence="1">Belongs to the bacterial ribosomal protein bL17 family.</text>
</comment>
<feature type="chain" id="PRO_1000055794" description="Large ribosomal subunit protein bL17">
    <location>
        <begin position="1"/>
        <end position="142"/>
    </location>
</feature>
<name>RL17_CHLAB</name>
<organism>
    <name type="scientific">Chlamydia abortus (strain DSM 27085 / S26/3)</name>
    <name type="common">Chlamydophila abortus</name>
    <dbReference type="NCBI Taxonomy" id="218497"/>
    <lineage>
        <taxon>Bacteria</taxon>
        <taxon>Pseudomonadati</taxon>
        <taxon>Chlamydiota</taxon>
        <taxon>Chlamydiia</taxon>
        <taxon>Chlamydiales</taxon>
        <taxon>Chlamydiaceae</taxon>
        <taxon>Chlamydia/Chlamydophila group</taxon>
        <taxon>Chlamydia</taxon>
    </lineage>
</organism>
<gene>
    <name evidence="1" type="primary">rplQ</name>
    <name type="ordered locus">CAB114</name>
</gene>
<keyword id="KW-0687">Ribonucleoprotein</keyword>
<keyword id="KW-0689">Ribosomal protein</keyword>
<sequence length="142" mass="16394">MQHARKKFRVGRTSAHNRCMLANMLKSLIHQERIETTLPKAKELRRHADKMITLAKKNTLAARRLAVARLMIRYNKLTSKEARQAKGGDLSVYNVDRKVINKLFDELGSRFVSRNGGYTRILKMQNRVGDNARKCIIEFLAN</sequence>